<protein>
    <recommendedName>
        <fullName evidence="1">Thymidylate synthase</fullName>
        <shortName evidence="1">TS</shortName>
        <shortName evidence="1">TSase</shortName>
        <ecNumber evidence="1">2.1.1.45</ecNumber>
    </recommendedName>
</protein>
<organism>
    <name type="scientific">Nitrosomonas eutropha (strain DSM 101675 / C91 / Nm57)</name>
    <dbReference type="NCBI Taxonomy" id="335283"/>
    <lineage>
        <taxon>Bacteria</taxon>
        <taxon>Pseudomonadati</taxon>
        <taxon>Pseudomonadota</taxon>
        <taxon>Betaproteobacteria</taxon>
        <taxon>Nitrosomonadales</taxon>
        <taxon>Nitrosomonadaceae</taxon>
        <taxon>Nitrosomonas</taxon>
    </lineage>
</organism>
<name>TYSY_NITEC</name>
<evidence type="ECO:0000255" key="1">
    <source>
        <dbReference type="HAMAP-Rule" id="MF_00008"/>
    </source>
</evidence>
<accession>Q0AHA4</accession>
<dbReference type="EC" id="2.1.1.45" evidence="1"/>
<dbReference type="EMBL" id="CP000450">
    <property type="protein sequence ID" value="ABI59278.1"/>
    <property type="molecule type" value="Genomic_DNA"/>
</dbReference>
<dbReference type="RefSeq" id="WP_011634101.1">
    <property type="nucleotide sequence ID" value="NC_008344.1"/>
</dbReference>
<dbReference type="SMR" id="Q0AHA4"/>
<dbReference type="STRING" id="335283.Neut_1021"/>
<dbReference type="KEGG" id="net:Neut_1021"/>
<dbReference type="eggNOG" id="COG0207">
    <property type="taxonomic scope" value="Bacteria"/>
</dbReference>
<dbReference type="HOGENOM" id="CLU_021669_0_0_4"/>
<dbReference type="OrthoDB" id="9774633at2"/>
<dbReference type="UniPathway" id="UPA00575"/>
<dbReference type="Proteomes" id="UP000001966">
    <property type="component" value="Chromosome"/>
</dbReference>
<dbReference type="GO" id="GO:0005829">
    <property type="term" value="C:cytosol"/>
    <property type="evidence" value="ECO:0007669"/>
    <property type="project" value="TreeGrafter"/>
</dbReference>
<dbReference type="GO" id="GO:0004799">
    <property type="term" value="F:thymidylate synthase activity"/>
    <property type="evidence" value="ECO:0007669"/>
    <property type="project" value="UniProtKB-UniRule"/>
</dbReference>
<dbReference type="GO" id="GO:0006231">
    <property type="term" value="P:dTMP biosynthetic process"/>
    <property type="evidence" value="ECO:0007669"/>
    <property type="project" value="UniProtKB-UniRule"/>
</dbReference>
<dbReference type="GO" id="GO:0006235">
    <property type="term" value="P:dTTP biosynthetic process"/>
    <property type="evidence" value="ECO:0007669"/>
    <property type="project" value="UniProtKB-UniRule"/>
</dbReference>
<dbReference type="GO" id="GO:0032259">
    <property type="term" value="P:methylation"/>
    <property type="evidence" value="ECO:0007669"/>
    <property type="project" value="UniProtKB-KW"/>
</dbReference>
<dbReference type="CDD" id="cd00351">
    <property type="entry name" value="TS_Pyrimidine_HMase"/>
    <property type="match status" value="1"/>
</dbReference>
<dbReference type="FunFam" id="3.30.572.10:FF:000001">
    <property type="entry name" value="Thymidylate synthase"/>
    <property type="match status" value="1"/>
</dbReference>
<dbReference type="Gene3D" id="3.30.572.10">
    <property type="entry name" value="Thymidylate synthase/dCMP hydroxymethylase domain"/>
    <property type="match status" value="1"/>
</dbReference>
<dbReference type="HAMAP" id="MF_00008">
    <property type="entry name" value="Thymidy_synth_bact"/>
    <property type="match status" value="1"/>
</dbReference>
<dbReference type="InterPro" id="IPR045097">
    <property type="entry name" value="Thymidate_synth/dCMP_Mease"/>
</dbReference>
<dbReference type="InterPro" id="IPR023451">
    <property type="entry name" value="Thymidate_synth/dCMP_Mease_dom"/>
</dbReference>
<dbReference type="InterPro" id="IPR036926">
    <property type="entry name" value="Thymidate_synth/dCMP_Mease_sf"/>
</dbReference>
<dbReference type="InterPro" id="IPR000398">
    <property type="entry name" value="Thymidylate_synthase"/>
</dbReference>
<dbReference type="InterPro" id="IPR020940">
    <property type="entry name" value="Thymidylate_synthase_AS"/>
</dbReference>
<dbReference type="NCBIfam" id="NF002497">
    <property type="entry name" value="PRK01827.1-3"/>
    <property type="match status" value="1"/>
</dbReference>
<dbReference type="NCBIfam" id="NF002499">
    <property type="entry name" value="PRK01827.1-5"/>
    <property type="match status" value="1"/>
</dbReference>
<dbReference type="NCBIfam" id="TIGR03284">
    <property type="entry name" value="thym_sym"/>
    <property type="match status" value="2"/>
</dbReference>
<dbReference type="PANTHER" id="PTHR11548:SF9">
    <property type="entry name" value="THYMIDYLATE SYNTHASE"/>
    <property type="match status" value="1"/>
</dbReference>
<dbReference type="PANTHER" id="PTHR11548">
    <property type="entry name" value="THYMIDYLATE SYNTHASE 1"/>
    <property type="match status" value="1"/>
</dbReference>
<dbReference type="Pfam" id="PF00303">
    <property type="entry name" value="Thymidylat_synt"/>
    <property type="match status" value="1"/>
</dbReference>
<dbReference type="PRINTS" id="PR00108">
    <property type="entry name" value="THYMDSNTHASE"/>
</dbReference>
<dbReference type="SUPFAM" id="SSF55831">
    <property type="entry name" value="Thymidylate synthase/dCMP hydroxymethylase"/>
    <property type="match status" value="1"/>
</dbReference>
<dbReference type="PROSITE" id="PS00091">
    <property type="entry name" value="THYMIDYLATE_SYNTHASE"/>
    <property type="match status" value="1"/>
</dbReference>
<comment type="function">
    <text evidence="1">Catalyzes the reductive methylation of 2'-deoxyuridine-5'-monophosphate (dUMP) to 2'-deoxythymidine-5'-monophosphate (dTMP) while utilizing 5,10-methylenetetrahydrofolate (mTHF) as the methyl donor and reductant in the reaction, yielding dihydrofolate (DHF) as a by-product. This enzymatic reaction provides an intracellular de novo source of dTMP, an essential precursor for DNA biosynthesis.</text>
</comment>
<comment type="catalytic activity">
    <reaction evidence="1">
        <text>dUMP + (6R)-5,10-methylene-5,6,7,8-tetrahydrofolate = 7,8-dihydrofolate + dTMP</text>
        <dbReference type="Rhea" id="RHEA:12104"/>
        <dbReference type="ChEBI" id="CHEBI:15636"/>
        <dbReference type="ChEBI" id="CHEBI:57451"/>
        <dbReference type="ChEBI" id="CHEBI:63528"/>
        <dbReference type="ChEBI" id="CHEBI:246422"/>
        <dbReference type="EC" id="2.1.1.45"/>
    </reaction>
</comment>
<comment type="pathway">
    <text evidence="1">Pyrimidine metabolism; dTTP biosynthesis.</text>
</comment>
<comment type="subunit">
    <text evidence="1">Homodimer.</text>
</comment>
<comment type="subcellular location">
    <subcellularLocation>
        <location evidence="1">Cytoplasm</location>
    </subcellularLocation>
</comment>
<comment type="similarity">
    <text evidence="1">Belongs to the thymidylate synthase family. Bacterial-type ThyA subfamily.</text>
</comment>
<proteinExistence type="inferred from homology"/>
<feature type="chain" id="PRO_1000000639" description="Thymidylate synthase">
    <location>
        <begin position="1"/>
        <end position="264"/>
    </location>
</feature>
<feature type="active site" description="Nucleophile" evidence="1">
    <location>
        <position position="146"/>
    </location>
</feature>
<feature type="binding site" description="in other chain" evidence="1">
    <location>
        <position position="21"/>
    </location>
    <ligand>
        <name>dUMP</name>
        <dbReference type="ChEBI" id="CHEBI:246422"/>
        <note>ligand shared between dimeric partners</note>
    </ligand>
</feature>
<feature type="binding site" evidence="1">
    <location>
        <position position="51"/>
    </location>
    <ligand>
        <name>(6R)-5,10-methylene-5,6,7,8-tetrahydrofolate</name>
        <dbReference type="ChEBI" id="CHEBI:15636"/>
    </ligand>
</feature>
<feature type="binding site" evidence="1">
    <location>
        <begin position="126"/>
        <end position="127"/>
    </location>
    <ligand>
        <name>dUMP</name>
        <dbReference type="ChEBI" id="CHEBI:246422"/>
        <note>ligand shared between dimeric partners</note>
    </ligand>
</feature>
<feature type="binding site" description="in other chain" evidence="1">
    <location>
        <begin position="166"/>
        <end position="169"/>
    </location>
    <ligand>
        <name>dUMP</name>
        <dbReference type="ChEBI" id="CHEBI:246422"/>
        <note>ligand shared between dimeric partners</note>
    </ligand>
</feature>
<feature type="binding site" evidence="1">
    <location>
        <position position="169"/>
    </location>
    <ligand>
        <name>(6R)-5,10-methylene-5,6,7,8-tetrahydrofolate</name>
        <dbReference type="ChEBI" id="CHEBI:15636"/>
    </ligand>
</feature>
<feature type="binding site" description="in other chain" evidence="1">
    <location>
        <position position="177"/>
    </location>
    <ligand>
        <name>dUMP</name>
        <dbReference type="ChEBI" id="CHEBI:246422"/>
        <note>ligand shared between dimeric partners</note>
    </ligand>
</feature>
<feature type="binding site" description="in other chain" evidence="1">
    <location>
        <begin position="207"/>
        <end position="209"/>
    </location>
    <ligand>
        <name>dUMP</name>
        <dbReference type="ChEBI" id="CHEBI:246422"/>
        <note>ligand shared between dimeric partners</note>
    </ligand>
</feature>
<feature type="binding site" evidence="1">
    <location>
        <position position="263"/>
    </location>
    <ligand>
        <name>(6R)-5,10-methylene-5,6,7,8-tetrahydrofolate</name>
        <dbReference type="ChEBI" id="CHEBI:15636"/>
    </ligand>
</feature>
<sequence length="264" mass="30373">MHPYLDLMRHVLQYGHKKTDRTGTGTLSIFGYQMRFDLQQGFPLVTTKQCHVKSIIHELLWFLRGDTNIDYLKKNGISIWNEWADKSGELGPVYGHQWRSWTVSGDKSIDQIAQVIQQIKATPDSRRMIISAWNVGDLDKMALAPCHVLFQFYVVDGKLSCQLYQRSADIFLGVPFNIASYSLLTLMIAQCCNLKPGEFIHTFGDAHLYLNHLEQARLQLTREPKSLPIMELNPAIRNILDFRYEDFTLHNYDPHPPIKAPVAV</sequence>
<keyword id="KW-0963">Cytoplasm</keyword>
<keyword id="KW-0489">Methyltransferase</keyword>
<keyword id="KW-0545">Nucleotide biosynthesis</keyword>
<keyword id="KW-0808">Transferase</keyword>
<reference key="1">
    <citation type="journal article" date="2007" name="Environ. Microbiol.">
        <title>Whole-genome analysis of the ammonia-oxidizing bacterium, Nitrosomonas eutropha C91: implications for niche adaptation.</title>
        <authorList>
            <person name="Stein L.Y."/>
            <person name="Arp D.J."/>
            <person name="Berube P.M."/>
            <person name="Chain P.S."/>
            <person name="Hauser L."/>
            <person name="Jetten M.S."/>
            <person name="Klotz M.G."/>
            <person name="Larimer F.W."/>
            <person name="Norton J.M."/>
            <person name="Op den Camp H.J.M."/>
            <person name="Shin M."/>
            <person name="Wei X."/>
        </authorList>
    </citation>
    <scope>NUCLEOTIDE SEQUENCE [LARGE SCALE GENOMIC DNA]</scope>
    <source>
        <strain>DSM 101675 / C91 / Nm57</strain>
    </source>
</reference>
<gene>
    <name evidence="1" type="primary">thyA</name>
    <name type="ordered locus">Neut_1021</name>
</gene>